<comment type="function">
    <text evidence="6">Together with the tyrosine-protein kinase SYK, enhances production of the cytokine CXCL8/IL-8 via the NFKB pathway and may thus have a role in the intestinal immune response.</text>
</comment>
<comment type="subunit">
    <text evidence="6">Interacts (via extracellular domain) with PTPRH (via extracellular domain); the interaction dephosphorylates CEACAM20. Interacts (phosphorylated form) with SYK (via SH2 domains); the interaction further enhances CEACAM20 phosphorylation.</text>
</comment>
<comment type="subcellular location">
    <subcellularLocation>
        <location evidence="5 6">Cell projection</location>
        <location evidence="5 6">Microvillus membrane</location>
        <topology evidence="8">Single-pass type I membrane protein</topology>
    </subcellularLocation>
    <subcellularLocation>
        <location evidence="5 6">Apical cell membrane</location>
        <topology evidence="8">Single-pass type I membrane protein</topology>
    </subcellularLocation>
    <text evidence="5 6">Colocalizes with PTPRH and CEACAM1 at the apical brush border of intestinal cells.</text>
</comment>
<comment type="tissue specificity">
    <text evidence="4 5 6">Strongly expressed in the small intestine and colon (at protein level) (PubMed:25908210, PubMed:26195794). Minimal expression in other tissues (at protein level) (PubMed:26195794). Highly expressed in cecum, colon, ileum, jejunum, and testis, and also detected at lower levels in salivary gland and thymus (PubMed:16139472).</text>
</comment>
<comment type="induction">
    <text evidence="5">In intestinal epithelium, up-regulated in the presence of Gram-positive commensal gut bacteria. May also be up-regulated by interferon gamma (IFNG) and butyrate (a product of bacterial fermentation).</text>
</comment>
<comment type="PTM">
    <text evidence="6">Phosphorylated on tyrosine residues by SYK, SRC and FYN in vitro.</text>
</comment>
<comment type="similarity">
    <text evidence="8">Belongs to the immunoglobulin superfamily. CEA family.</text>
</comment>
<protein>
    <recommendedName>
        <fullName evidence="8">Cell adhesion molecule CEACAM20</fullName>
    </recommendedName>
    <alternativeName>
        <fullName evidence="7">Carcinoembryonic antigen-related cell adhesion molecule 20</fullName>
        <shortName evidence="11">CEA cell adhesion molecule 20</shortName>
    </alternativeName>
</protein>
<sequence>MELAGFHCCSWTVILLSALLPTTWRPPAAAHFIHRADLLSNTQMERAPLAKLTLTVNQSTVTEQREMAVFYCNTNADNITIHWVSNNSLLVLNERMKLSADNKTLTILIVQREDSGSYLCEVQHGFEVQRSNTASLTVNYGPDPVSIKLDSGVAAGDVVEVMEGNTVNFRVEAQSSPVPAYAWYLPSDFIQPPTTGTFTIDAVSREHEGMYRCLVSNPVTNLSRLGVVKVQVLEKVTAPNIEFPTLALVENATSVTLTCKTSHQRVGVHWFLKGQPLRPSDRLTLSSQNRTLTIHGLQRDDIGPYECEVWNWGSQARSVPLKLTINYGPDQVEITQGPASGVVSTIEAMLNSSLTLYCRADSIPGARYQWTHEHSSKVLDGEQLSIEALRQEHQGIYSCTSSNDVTGLARSASVLVMVVGLQSSSMSPGAIAGIVIGILVAIALAIGLGYFLYSTKDRWTRRRSASDTTSSNTIPPTSVMQSTPESRHNKPMTVYDNTPKPEGEARGKKMWSLPRDSPEQFYEKKPPSAAPEGPRKPLPQIPKQPLMPPGPGRNEESNYEKLLNSNHSLYCKITPSA</sequence>
<organism evidence="12">
    <name type="scientific">Mus musculus</name>
    <name type="common">Mouse</name>
    <dbReference type="NCBI Taxonomy" id="10090"/>
    <lineage>
        <taxon>Eukaryota</taxon>
        <taxon>Metazoa</taxon>
        <taxon>Chordata</taxon>
        <taxon>Craniata</taxon>
        <taxon>Vertebrata</taxon>
        <taxon>Euteleostomi</taxon>
        <taxon>Mammalia</taxon>
        <taxon>Eutheria</taxon>
        <taxon>Euarchontoglires</taxon>
        <taxon>Glires</taxon>
        <taxon>Rodentia</taxon>
        <taxon>Myomorpha</taxon>
        <taxon>Muroidea</taxon>
        <taxon>Muridae</taxon>
        <taxon>Murinae</taxon>
        <taxon>Mus</taxon>
        <taxon>Mus</taxon>
    </lineage>
</organism>
<gene>
    <name evidence="7" type="primary">Ceacam20</name>
</gene>
<proteinExistence type="evidence at protein level"/>
<feature type="signal peptide" evidence="1">
    <location>
        <begin position="1"/>
        <end position="30"/>
    </location>
</feature>
<feature type="chain" id="PRO_5007716426" description="Cell adhesion molecule CEACAM20">
    <location>
        <begin position="31"/>
        <end position="577"/>
    </location>
</feature>
<feature type="topological domain" description="Extracellular" evidence="8">
    <location>
        <begin position="31"/>
        <end position="430"/>
    </location>
</feature>
<feature type="transmembrane region" description="Helical" evidence="1">
    <location>
        <begin position="431"/>
        <end position="451"/>
    </location>
</feature>
<feature type="topological domain" description="Cytoplasmic" evidence="8">
    <location>
        <begin position="452"/>
        <end position="577"/>
    </location>
</feature>
<feature type="domain" description="Ig-like C2-type 1" evidence="2">
    <location>
        <begin position="48"/>
        <end position="137"/>
    </location>
</feature>
<feature type="domain" description="Ig-like C2-type 2" evidence="2">
    <location>
        <begin position="142"/>
        <end position="223"/>
    </location>
</feature>
<feature type="domain" description="Ig-like C2-type 3" evidence="2">
    <location>
        <begin position="239"/>
        <end position="324"/>
    </location>
</feature>
<feature type="domain" description="Ig-like C2-type 4" evidence="2">
    <location>
        <begin position="329"/>
        <end position="415"/>
    </location>
</feature>
<feature type="region of interest" description="Disordered" evidence="3">
    <location>
        <begin position="461"/>
        <end position="568"/>
    </location>
</feature>
<feature type="compositionally biased region" description="Polar residues" evidence="3">
    <location>
        <begin position="474"/>
        <end position="484"/>
    </location>
</feature>
<feature type="compositionally biased region" description="Basic and acidic residues" evidence="3">
    <location>
        <begin position="516"/>
        <end position="526"/>
    </location>
</feature>
<feature type="compositionally biased region" description="Pro residues" evidence="3">
    <location>
        <begin position="536"/>
        <end position="551"/>
    </location>
</feature>
<feature type="modified residue" description="Phosphotyrosine" evidence="6">
    <location>
        <position position="559"/>
    </location>
</feature>
<feature type="modified residue" description="Phosphotyrosine" evidence="6">
    <location>
        <position position="570"/>
    </location>
</feature>
<feature type="glycosylation site" description="N-linked (GlcNAc...) asparagine" evidence="1">
    <location>
        <position position="78"/>
    </location>
</feature>
<feature type="glycosylation site" description="N-linked (GlcNAc...) asparagine" evidence="1">
    <location>
        <position position="102"/>
    </location>
</feature>
<feature type="glycosylation site" description="N-linked (GlcNAc...) asparagine" evidence="1">
    <location>
        <position position="289"/>
    </location>
</feature>
<feature type="disulfide bond" evidence="2">
    <location>
        <begin position="72"/>
        <end position="120"/>
    </location>
</feature>
<feature type="disulfide bond" evidence="2">
    <location>
        <begin position="259"/>
        <end position="307"/>
    </location>
</feature>
<feature type="disulfide bond" evidence="2">
    <location>
        <begin position="358"/>
        <end position="399"/>
    </location>
</feature>
<feature type="mutagenesis site" description="Abolishes tyrosine phosphorylation and interaction with SYK; when associated with F-570." evidence="6">
    <original>Y</original>
    <variation>F</variation>
    <location>
        <position position="559"/>
    </location>
</feature>
<feature type="mutagenesis site" description="Abolishes tyrosine phosphorylation and interaction with SYK; when associated with F-559." evidence="6">
    <original>Y</original>
    <variation>F</variation>
    <location>
        <position position="570"/>
    </location>
</feature>
<feature type="sequence conflict" description="In Ref. 3; AAH49361." evidence="8" ref="3">
    <original>C</original>
    <variation>G</variation>
    <location>
        <position position="8"/>
    </location>
</feature>
<feature type="sequence conflict" description="In Ref. 3; AAH49361." evidence="8" ref="3">
    <original>T</original>
    <variation>I</variation>
    <location>
        <position position="60"/>
    </location>
</feature>
<feature type="sequence conflict" description="In Ref. 3; AAH49361." evidence="8" ref="3">
    <original>P</original>
    <variation>L</variation>
    <location>
        <position position="484"/>
    </location>
</feature>
<accession>Q9D2Z1</accession>
<accession>Q80Y42</accession>
<reference evidence="10" key="1">
    <citation type="journal article" date="2005" name="Science">
        <title>The transcriptional landscape of the mammalian genome.</title>
        <authorList>
            <person name="Carninci P."/>
            <person name="Kasukawa T."/>
            <person name="Katayama S."/>
            <person name="Gough J."/>
            <person name="Frith M.C."/>
            <person name="Maeda N."/>
            <person name="Oyama R."/>
            <person name="Ravasi T."/>
            <person name="Lenhard B."/>
            <person name="Wells C."/>
            <person name="Kodzius R."/>
            <person name="Shimokawa K."/>
            <person name="Bajic V.B."/>
            <person name="Brenner S.E."/>
            <person name="Batalov S."/>
            <person name="Forrest A.R."/>
            <person name="Zavolan M."/>
            <person name="Davis M.J."/>
            <person name="Wilming L.G."/>
            <person name="Aidinis V."/>
            <person name="Allen J.E."/>
            <person name="Ambesi-Impiombato A."/>
            <person name="Apweiler R."/>
            <person name="Aturaliya R.N."/>
            <person name="Bailey T.L."/>
            <person name="Bansal M."/>
            <person name="Baxter L."/>
            <person name="Beisel K.W."/>
            <person name="Bersano T."/>
            <person name="Bono H."/>
            <person name="Chalk A.M."/>
            <person name="Chiu K.P."/>
            <person name="Choudhary V."/>
            <person name="Christoffels A."/>
            <person name="Clutterbuck D.R."/>
            <person name="Crowe M.L."/>
            <person name="Dalla E."/>
            <person name="Dalrymple B.P."/>
            <person name="de Bono B."/>
            <person name="Della Gatta G."/>
            <person name="di Bernardo D."/>
            <person name="Down T."/>
            <person name="Engstrom P."/>
            <person name="Fagiolini M."/>
            <person name="Faulkner G."/>
            <person name="Fletcher C.F."/>
            <person name="Fukushima T."/>
            <person name="Furuno M."/>
            <person name="Futaki S."/>
            <person name="Gariboldi M."/>
            <person name="Georgii-Hemming P."/>
            <person name="Gingeras T.R."/>
            <person name="Gojobori T."/>
            <person name="Green R.E."/>
            <person name="Gustincich S."/>
            <person name="Harbers M."/>
            <person name="Hayashi Y."/>
            <person name="Hensch T.K."/>
            <person name="Hirokawa N."/>
            <person name="Hill D."/>
            <person name="Huminiecki L."/>
            <person name="Iacono M."/>
            <person name="Ikeo K."/>
            <person name="Iwama A."/>
            <person name="Ishikawa T."/>
            <person name="Jakt M."/>
            <person name="Kanapin A."/>
            <person name="Katoh M."/>
            <person name="Kawasawa Y."/>
            <person name="Kelso J."/>
            <person name="Kitamura H."/>
            <person name="Kitano H."/>
            <person name="Kollias G."/>
            <person name="Krishnan S.P."/>
            <person name="Kruger A."/>
            <person name="Kummerfeld S.K."/>
            <person name="Kurochkin I.V."/>
            <person name="Lareau L.F."/>
            <person name="Lazarevic D."/>
            <person name="Lipovich L."/>
            <person name="Liu J."/>
            <person name="Liuni S."/>
            <person name="McWilliam S."/>
            <person name="Madan Babu M."/>
            <person name="Madera M."/>
            <person name="Marchionni L."/>
            <person name="Matsuda H."/>
            <person name="Matsuzawa S."/>
            <person name="Miki H."/>
            <person name="Mignone F."/>
            <person name="Miyake S."/>
            <person name="Morris K."/>
            <person name="Mottagui-Tabar S."/>
            <person name="Mulder N."/>
            <person name="Nakano N."/>
            <person name="Nakauchi H."/>
            <person name="Ng P."/>
            <person name="Nilsson R."/>
            <person name="Nishiguchi S."/>
            <person name="Nishikawa S."/>
            <person name="Nori F."/>
            <person name="Ohara O."/>
            <person name="Okazaki Y."/>
            <person name="Orlando V."/>
            <person name="Pang K.C."/>
            <person name="Pavan W.J."/>
            <person name="Pavesi G."/>
            <person name="Pesole G."/>
            <person name="Petrovsky N."/>
            <person name="Piazza S."/>
            <person name="Reed J."/>
            <person name="Reid J.F."/>
            <person name="Ring B.Z."/>
            <person name="Ringwald M."/>
            <person name="Rost B."/>
            <person name="Ruan Y."/>
            <person name="Salzberg S.L."/>
            <person name="Sandelin A."/>
            <person name="Schneider C."/>
            <person name="Schoenbach C."/>
            <person name="Sekiguchi K."/>
            <person name="Semple C.A."/>
            <person name="Seno S."/>
            <person name="Sessa L."/>
            <person name="Sheng Y."/>
            <person name="Shibata Y."/>
            <person name="Shimada H."/>
            <person name="Shimada K."/>
            <person name="Silva D."/>
            <person name="Sinclair B."/>
            <person name="Sperling S."/>
            <person name="Stupka E."/>
            <person name="Sugiura K."/>
            <person name="Sultana R."/>
            <person name="Takenaka Y."/>
            <person name="Taki K."/>
            <person name="Tammoja K."/>
            <person name="Tan S.L."/>
            <person name="Tang S."/>
            <person name="Taylor M.S."/>
            <person name="Tegner J."/>
            <person name="Teichmann S.A."/>
            <person name="Ueda H.R."/>
            <person name="van Nimwegen E."/>
            <person name="Verardo R."/>
            <person name="Wei C.L."/>
            <person name="Yagi K."/>
            <person name="Yamanishi H."/>
            <person name="Zabarovsky E."/>
            <person name="Zhu S."/>
            <person name="Zimmer A."/>
            <person name="Hide W."/>
            <person name="Bult C."/>
            <person name="Grimmond S.M."/>
            <person name="Teasdale R.D."/>
            <person name="Liu E.T."/>
            <person name="Brusic V."/>
            <person name="Quackenbush J."/>
            <person name="Wahlestedt C."/>
            <person name="Mattick J.S."/>
            <person name="Hume D.A."/>
            <person name="Kai C."/>
            <person name="Sasaki D."/>
            <person name="Tomaru Y."/>
            <person name="Fukuda S."/>
            <person name="Kanamori-Katayama M."/>
            <person name="Suzuki M."/>
            <person name="Aoki J."/>
            <person name="Arakawa T."/>
            <person name="Iida J."/>
            <person name="Imamura K."/>
            <person name="Itoh M."/>
            <person name="Kato T."/>
            <person name="Kawaji H."/>
            <person name="Kawagashira N."/>
            <person name="Kawashima T."/>
            <person name="Kojima M."/>
            <person name="Kondo S."/>
            <person name="Konno H."/>
            <person name="Nakano K."/>
            <person name="Ninomiya N."/>
            <person name="Nishio T."/>
            <person name="Okada M."/>
            <person name="Plessy C."/>
            <person name="Shibata K."/>
            <person name="Shiraki T."/>
            <person name="Suzuki S."/>
            <person name="Tagami M."/>
            <person name="Waki K."/>
            <person name="Watahiki A."/>
            <person name="Okamura-Oho Y."/>
            <person name="Suzuki H."/>
            <person name="Kawai J."/>
            <person name="Hayashizaki Y."/>
        </authorList>
    </citation>
    <scope>NUCLEOTIDE SEQUENCE [LARGE SCALE MRNA]</scope>
    <source>
        <strain>C57BL/6J</strain>
        <tissue evidence="10">Cecum</tissue>
    </source>
</reference>
<reference evidence="12" key="2">
    <citation type="journal article" date="2009" name="PLoS Biol.">
        <title>Lineage-specific biology revealed by a finished genome assembly of the mouse.</title>
        <authorList>
            <person name="Church D.M."/>
            <person name="Goodstadt L."/>
            <person name="Hillier L.W."/>
            <person name="Zody M.C."/>
            <person name="Goldstein S."/>
            <person name="She X."/>
            <person name="Bult C.J."/>
            <person name="Agarwala R."/>
            <person name="Cherry J.L."/>
            <person name="DiCuccio M."/>
            <person name="Hlavina W."/>
            <person name="Kapustin Y."/>
            <person name="Meric P."/>
            <person name="Maglott D."/>
            <person name="Birtle Z."/>
            <person name="Marques A.C."/>
            <person name="Graves T."/>
            <person name="Zhou S."/>
            <person name="Teague B."/>
            <person name="Potamousis K."/>
            <person name="Churas C."/>
            <person name="Place M."/>
            <person name="Herschleb J."/>
            <person name="Runnheim R."/>
            <person name="Forrest D."/>
            <person name="Amos-Landgraf J."/>
            <person name="Schwartz D.C."/>
            <person name="Cheng Z."/>
            <person name="Lindblad-Toh K."/>
            <person name="Eichler E.E."/>
            <person name="Ponting C.P."/>
        </authorList>
    </citation>
    <scope>NUCLEOTIDE SEQUENCE [LARGE SCALE GENOMIC DNA]</scope>
    <source>
        <strain evidence="12">C57BL/6J</strain>
    </source>
</reference>
<reference evidence="9" key="3">
    <citation type="journal article" date="2004" name="Genome Res.">
        <title>The status, quality, and expansion of the NIH full-length cDNA project: the Mammalian Gene Collection (MGC).</title>
        <authorList>
            <consortium name="The MGC Project Team"/>
        </authorList>
    </citation>
    <scope>NUCLEOTIDE SEQUENCE [LARGE SCALE MRNA]</scope>
    <source>
        <strain evidence="9">FVB/N</strain>
        <tissue evidence="9">Colon</tissue>
    </source>
</reference>
<reference evidence="8" key="4">
    <citation type="journal article" date="2005" name="Genomics">
        <title>Identification of a novel group of evolutionarily conserved members within the rapidly diverging murine Cea family.</title>
        <authorList>
            <person name="Zebhauser R."/>
            <person name="Kammerer R."/>
            <person name="Eisenried A."/>
            <person name="McLellan A."/>
            <person name="Moore T."/>
            <person name="Zimmermann W."/>
        </authorList>
    </citation>
    <scope>IDENTIFICATION</scope>
    <scope>TISSUE SPECIFICITY</scope>
</reference>
<reference evidence="8" key="5">
    <citation type="journal article" date="2015" name="Genes Cells">
        <title>Regulation by gut commensal bacteria of carcinoembryonic antigen-related cell adhesion molecule expression in the intestinal epithelium.</title>
        <authorList>
            <person name="Kitamura Y."/>
            <person name="Murata Y."/>
            <person name="Park J.H."/>
            <person name="Kotani T."/>
            <person name="Imada S."/>
            <person name="Saito Y."/>
            <person name="Okazawa H."/>
            <person name="Azuma T."/>
            <person name="Matozaki T."/>
        </authorList>
    </citation>
    <scope>SUBCELLULAR LOCATION</scope>
    <scope>TISSUE SPECIFICITY</scope>
    <scope>INDUCTION</scope>
</reference>
<reference evidence="8" key="6">
    <citation type="journal article" date="2015" name="Proc. Natl. Acad. Sci. U.S.A.">
        <title>Protein tyrosine phosphatase SAP-1 protects against colitis through regulation of CEACAM20 in the intestinal epithelium.</title>
        <authorList>
            <person name="Murata Y."/>
            <person name="Kotani T."/>
            <person name="Supriatna Y."/>
            <person name="Kitamura Y."/>
            <person name="Imada S."/>
            <person name="Kawahara K."/>
            <person name="Nishio M."/>
            <person name="Daniwijaya E.W."/>
            <person name="Sadakata H."/>
            <person name="Kusakari S."/>
            <person name="Mori M."/>
            <person name="Kanazawa Y."/>
            <person name="Saito Y."/>
            <person name="Okawa K."/>
            <person name="Takeda-Morishita M."/>
            <person name="Okazawa H."/>
            <person name="Ohnishi H."/>
            <person name="Azuma T."/>
            <person name="Suzuki A."/>
            <person name="Matozaki T."/>
        </authorList>
    </citation>
    <scope>FUNCTION</scope>
    <scope>INTERACTION WITH PTPRH AND SYK</scope>
    <scope>SUBCELLULAR LOCATION</scope>
    <scope>TISSUE SPECIFICITY</scope>
    <scope>PHOSPHORYLATION AT TYR-559 AND TYR-570</scope>
    <scope>MUTAGENESIS OF TYR-559 AND TYR-570</scope>
    <scope>IDENTIFICATION BY MASS SPECTROMETRY</scope>
</reference>
<keyword id="KW-1003">Cell membrane</keyword>
<keyword id="KW-0966">Cell projection</keyword>
<keyword id="KW-1015">Disulfide bond</keyword>
<keyword id="KW-0325">Glycoprotein</keyword>
<keyword id="KW-0391">Immunity</keyword>
<keyword id="KW-0393">Immunoglobulin domain</keyword>
<keyword id="KW-0472">Membrane</keyword>
<keyword id="KW-0597">Phosphoprotein</keyword>
<keyword id="KW-1185">Reference proteome</keyword>
<keyword id="KW-0732">Signal</keyword>
<keyword id="KW-0812">Transmembrane</keyword>
<keyword id="KW-1133">Transmembrane helix</keyword>
<dbReference type="EMBL" id="AK018613">
    <property type="protein sequence ID" value="BAB31307.1"/>
    <property type="molecule type" value="mRNA"/>
</dbReference>
<dbReference type="EMBL" id="AC130530">
    <property type="status" value="NOT_ANNOTATED_CDS"/>
    <property type="molecule type" value="Genomic_DNA"/>
</dbReference>
<dbReference type="EMBL" id="BC049361">
    <property type="protein sequence ID" value="AAH49361.1"/>
    <property type="molecule type" value="mRNA"/>
</dbReference>
<dbReference type="CCDS" id="CCDS20919.1"/>
<dbReference type="RefSeq" id="NP_082115.2">
    <property type="nucleotide sequence ID" value="NM_027839.2"/>
</dbReference>
<dbReference type="SMR" id="Q9D2Z1"/>
<dbReference type="FunCoup" id="Q9D2Z1">
    <property type="interactions" value="8"/>
</dbReference>
<dbReference type="STRING" id="10090.ENSMUSP00000092344"/>
<dbReference type="GlyCosmos" id="Q9D2Z1">
    <property type="glycosylation" value="3 sites, No reported glycans"/>
</dbReference>
<dbReference type="GlyGen" id="Q9D2Z1">
    <property type="glycosylation" value="4 sites, 1 O-linked glycan (1 site)"/>
</dbReference>
<dbReference type="iPTMnet" id="Q9D2Z1"/>
<dbReference type="PhosphoSitePlus" id="Q9D2Z1"/>
<dbReference type="PaxDb" id="10090-ENSMUSP00000092344"/>
<dbReference type="ProteomicsDB" id="281167"/>
<dbReference type="Antibodypedia" id="72273">
    <property type="antibodies" value="23 antibodies from 11 providers"/>
</dbReference>
<dbReference type="DNASU" id="71601"/>
<dbReference type="Ensembl" id="ENSMUST00000094753.6">
    <property type="protein sequence ID" value="ENSMUSP00000092344.5"/>
    <property type="gene ID" value="ENSMUSG00000070777.6"/>
</dbReference>
<dbReference type="GeneID" id="71601"/>
<dbReference type="KEGG" id="mmu:71601"/>
<dbReference type="UCSC" id="uc012fbl.1">
    <property type="organism name" value="mouse"/>
</dbReference>
<dbReference type="AGR" id="MGI:1918851"/>
<dbReference type="CTD" id="125931"/>
<dbReference type="MGI" id="MGI:1918851">
    <property type="gene designation" value="Ceacam20"/>
</dbReference>
<dbReference type="VEuPathDB" id="HostDB:ENSMUSG00000070777"/>
<dbReference type="eggNOG" id="ENOG502RXPD">
    <property type="taxonomic scope" value="Eukaryota"/>
</dbReference>
<dbReference type="GeneTree" id="ENSGT01100000263479"/>
<dbReference type="HOGENOM" id="CLU_032483_0_0_1"/>
<dbReference type="InParanoid" id="Q9D2Z1"/>
<dbReference type="OMA" id="LTCQTAH"/>
<dbReference type="OrthoDB" id="6159398at2759"/>
<dbReference type="PhylomeDB" id="Q9D2Z1"/>
<dbReference type="TreeFam" id="TF331199"/>
<dbReference type="BioGRID-ORCS" id="71601">
    <property type="hits" value="2 hits in 78 CRISPR screens"/>
</dbReference>
<dbReference type="ChiTaRS" id="Ceacam20">
    <property type="organism name" value="mouse"/>
</dbReference>
<dbReference type="PRO" id="PR:Q9D2Z1"/>
<dbReference type="Proteomes" id="UP000000589">
    <property type="component" value="Chromosome 7"/>
</dbReference>
<dbReference type="RNAct" id="Q9D2Z1">
    <property type="molecule type" value="protein"/>
</dbReference>
<dbReference type="Bgee" id="ENSMUSG00000070777">
    <property type="expression patterns" value="Expressed in animal zygote and 25 other cell types or tissues"/>
</dbReference>
<dbReference type="ExpressionAtlas" id="Q9D2Z1">
    <property type="expression patterns" value="baseline and differential"/>
</dbReference>
<dbReference type="GO" id="GO:0016324">
    <property type="term" value="C:apical plasma membrane"/>
    <property type="evidence" value="ECO:0000314"/>
    <property type="project" value="UniProtKB"/>
</dbReference>
<dbReference type="GO" id="GO:0031528">
    <property type="term" value="C:microvillus membrane"/>
    <property type="evidence" value="ECO:0000314"/>
    <property type="project" value="UniProtKB"/>
</dbReference>
<dbReference type="GO" id="GO:0002376">
    <property type="term" value="P:immune system process"/>
    <property type="evidence" value="ECO:0007669"/>
    <property type="project" value="UniProtKB-KW"/>
</dbReference>
<dbReference type="GO" id="GO:0001819">
    <property type="term" value="P:positive regulation of cytokine production"/>
    <property type="evidence" value="ECO:0000314"/>
    <property type="project" value="UniProtKB"/>
</dbReference>
<dbReference type="GO" id="GO:0009617">
    <property type="term" value="P:response to bacterium"/>
    <property type="evidence" value="ECO:0000270"/>
    <property type="project" value="UniProtKB"/>
</dbReference>
<dbReference type="CDD" id="cd00096">
    <property type="entry name" value="Ig"/>
    <property type="match status" value="1"/>
</dbReference>
<dbReference type="FunFam" id="2.60.40.10:FF:000244">
    <property type="entry name" value="carcinoembryonic antigen-related cell adhesion molecule 16"/>
    <property type="match status" value="2"/>
</dbReference>
<dbReference type="Gene3D" id="2.60.40.10">
    <property type="entry name" value="Immunoglobulins"/>
    <property type="match status" value="4"/>
</dbReference>
<dbReference type="InterPro" id="IPR007110">
    <property type="entry name" value="Ig-like_dom"/>
</dbReference>
<dbReference type="InterPro" id="IPR036179">
    <property type="entry name" value="Ig-like_dom_sf"/>
</dbReference>
<dbReference type="InterPro" id="IPR013783">
    <property type="entry name" value="Ig-like_fold"/>
</dbReference>
<dbReference type="InterPro" id="IPR013098">
    <property type="entry name" value="Ig_I-set"/>
</dbReference>
<dbReference type="InterPro" id="IPR003599">
    <property type="entry name" value="Ig_sub"/>
</dbReference>
<dbReference type="InterPro" id="IPR003598">
    <property type="entry name" value="Ig_sub2"/>
</dbReference>
<dbReference type="InterPro" id="IPR052598">
    <property type="entry name" value="IgSF_CEA-related"/>
</dbReference>
<dbReference type="PANTHER" id="PTHR44337:SF20">
    <property type="entry name" value="CARCINOEMBRYONIC ANTIGEN-RELATED CELL ADHESION MOLECULE 5-RELATED"/>
    <property type="match status" value="1"/>
</dbReference>
<dbReference type="PANTHER" id="PTHR44337">
    <property type="entry name" value="CARCINOEMBRYONIC ANTIGEN-RELATED CELL ADHESION MOLECULE 8"/>
    <property type="match status" value="1"/>
</dbReference>
<dbReference type="Pfam" id="PF07679">
    <property type="entry name" value="I-set"/>
    <property type="match status" value="1"/>
</dbReference>
<dbReference type="Pfam" id="PF13927">
    <property type="entry name" value="Ig_3"/>
    <property type="match status" value="3"/>
</dbReference>
<dbReference type="SMART" id="SM00409">
    <property type="entry name" value="IG"/>
    <property type="match status" value="4"/>
</dbReference>
<dbReference type="SMART" id="SM00408">
    <property type="entry name" value="IGc2"/>
    <property type="match status" value="4"/>
</dbReference>
<dbReference type="SUPFAM" id="SSF48726">
    <property type="entry name" value="Immunoglobulin"/>
    <property type="match status" value="4"/>
</dbReference>
<dbReference type="PROSITE" id="PS50835">
    <property type="entry name" value="IG_LIKE"/>
    <property type="match status" value="4"/>
</dbReference>
<evidence type="ECO:0000255" key="1"/>
<evidence type="ECO:0000255" key="2">
    <source>
        <dbReference type="PROSITE-ProRule" id="PRU00114"/>
    </source>
</evidence>
<evidence type="ECO:0000256" key="3">
    <source>
        <dbReference type="SAM" id="MobiDB-lite"/>
    </source>
</evidence>
<evidence type="ECO:0000269" key="4">
    <source>
    </source>
</evidence>
<evidence type="ECO:0000269" key="5">
    <source>
    </source>
</evidence>
<evidence type="ECO:0000269" key="6">
    <source>
    </source>
</evidence>
<evidence type="ECO:0000303" key="7">
    <source>
    </source>
</evidence>
<evidence type="ECO:0000305" key="8"/>
<evidence type="ECO:0000312" key="9">
    <source>
        <dbReference type="EMBL" id="AAH49361.1"/>
    </source>
</evidence>
<evidence type="ECO:0000312" key="10">
    <source>
        <dbReference type="EMBL" id="BAB31307.1"/>
    </source>
</evidence>
<evidence type="ECO:0000312" key="11">
    <source>
        <dbReference type="MGI" id="MGI:1918851"/>
    </source>
</evidence>
<evidence type="ECO:0000312" key="12">
    <source>
        <dbReference type="Proteomes" id="UP000000589"/>
    </source>
</evidence>
<name>CEA20_MOUSE</name>